<dbReference type="EC" id="3.4.24.-"/>
<dbReference type="EMBL" id="AE009442">
    <property type="protein sequence ID" value="AAO28211.1"/>
    <property type="molecule type" value="Genomic_DNA"/>
</dbReference>
<dbReference type="SMR" id="Q87EI0"/>
<dbReference type="KEGG" id="xft:PD_0327"/>
<dbReference type="HOGENOM" id="CLU_025778_0_2_6"/>
<dbReference type="Proteomes" id="UP000002516">
    <property type="component" value="Chromosome"/>
</dbReference>
<dbReference type="GO" id="GO:0005886">
    <property type="term" value="C:plasma membrane"/>
    <property type="evidence" value="ECO:0007669"/>
    <property type="project" value="UniProtKB-SubCell"/>
</dbReference>
<dbReference type="GO" id="GO:0046872">
    <property type="term" value="F:metal ion binding"/>
    <property type="evidence" value="ECO:0007669"/>
    <property type="project" value="UniProtKB-KW"/>
</dbReference>
<dbReference type="GO" id="GO:0004222">
    <property type="term" value="F:metalloendopeptidase activity"/>
    <property type="evidence" value="ECO:0007669"/>
    <property type="project" value="InterPro"/>
</dbReference>
<dbReference type="GO" id="GO:0006508">
    <property type="term" value="P:proteolysis"/>
    <property type="evidence" value="ECO:0007669"/>
    <property type="project" value="UniProtKB-KW"/>
</dbReference>
<dbReference type="CDD" id="cd06163">
    <property type="entry name" value="S2P-M50_PDZ_RseP-like"/>
    <property type="match status" value="1"/>
</dbReference>
<dbReference type="Gene3D" id="2.30.42.10">
    <property type="match status" value="2"/>
</dbReference>
<dbReference type="InterPro" id="IPR001478">
    <property type="entry name" value="PDZ"/>
</dbReference>
<dbReference type="InterPro" id="IPR041489">
    <property type="entry name" value="PDZ_6"/>
</dbReference>
<dbReference type="InterPro" id="IPR036034">
    <property type="entry name" value="PDZ_sf"/>
</dbReference>
<dbReference type="InterPro" id="IPR004387">
    <property type="entry name" value="Pept_M50_Zn"/>
</dbReference>
<dbReference type="InterPro" id="IPR008915">
    <property type="entry name" value="Peptidase_M50"/>
</dbReference>
<dbReference type="NCBIfam" id="TIGR00054">
    <property type="entry name" value="RIP metalloprotease RseP"/>
    <property type="match status" value="1"/>
</dbReference>
<dbReference type="PANTHER" id="PTHR42837:SF2">
    <property type="entry name" value="MEMBRANE METALLOPROTEASE ARASP2, CHLOROPLASTIC-RELATED"/>
    <property type="match status" value="1"/>
</dbReference>
<dbReference type="PANTHER" id="PTHR42837">
    <property type="entry name" value="REGULATOR OF SIGMA-E PROTEASE RSEP"/>
    <property type="match status" value="1"/>
</dbReference>
<dbReference type="Pfam" id="PF17820">
    <property type="entry name" value="PDZ_6"/>
    <property type="match status" value="2"/>
</dbReference>
<dbReference type="Pfam" id="PF02163">
    <property type="entry name" value="Peptidase_M50"/>
    <property type="match status" value="1"/>
</dbReference>
<dbReference type="SMART" id="SM00228">
    <property type="entry name" value="PDZ"/>
    <property type="match status" value="2"/>
</dbReference>
<dbReference type="SUPFAM" id="SSF50156">
    <property type="entry name" value="PDZ domain-like"/>
    <property type="match status" value="2"/>
</dbReference>
<dbReference type="PROSITE" id="PS50106">
    <property type="entry name" value="PDZ"/>
    <property type="match status" value="1"/>
</dbReference>
<dbReference type="PROSITE" id="PS00142">
    <property type="entry name" value="ZINC_PROTEASE"/>
    <property type="match status" value="1"/>
</dbReference>
<reference key="1">
    <citation type="journal article" date="2003" name="J. Bacteriol.">
        <title>Comparative analyses of the complete genome sequences of Pierce's disease and citrus variegated chlorosis strains of Xylella fastidiosa.</title>
        <authorList>
            <person name="Van Sluys M.A."/>
            <person name="de Oliveira M.C."/>
            <person name="Monteiro-Vitorello C.B."/>
            <person name="Miyaki C.Y."/>
            <person name="Furlan L.R."/>
            <person name="Camargo L.E.A."/>
            <person name="da Silva A.C.R."/>
            <person name="Moon D.H."/>
            <person name="Takita M.A."/>
            <person name="Lemos E.G.M."/>
            <person name="Machado M.A."/>
            <person name="Ferro M.I.T."/>
            <person name="da Silva F.R."/>
            <person name="Goldman M.H.S."/>
            <person name="Goldman G.H."/>
            <person name="Lemos M.V.F."/>
            <person name="El-Dorry H."/>
            <person name="Tsai S.M."/>
            <person name="Carrer H."/>
            <person name="Carraro D.M."/>
            <person name="de Oliveira R.C."/>
            <person name="Nunes L.R."/>
            <person name="Siqueira W.J."/>
            <person name="Coutinho L.L."/>
            <person name="Kimura E.T."/>
            <person name="Ferro E.S."/>
            <person name="Harakava R."/>
            <person name="Kuramae E.E."/>
            <person name="Marino C.L."/>
            <person name="Giglioti E."/>
            <person name="Abreu I.L."/>
            <person name="Alves L.M.C."/>
            <person name="do Amaral A.M."/>
            <person name="Baia G.S."/>
            <person name="Blanco S.R."/>
            <person name="Brito M.S."/>
            <person name="Cannavan F.S."/>
            <person name="Celestino A.V."/>
            <person name="da Cunha A.F."/>
            <person name="Fenille R.C."/>
            <person name="Ferro J.A."/>
            <person name="Formighieri E.F."/>
            <person name="Kishi L.T."/>
            <person name="Leoni S.G."/>
            <person name="Oliveira A.R."/>
            <person name="Rosa V.E. Jr."/>
            <person name="Sassaki F.T."/>
            <person name="Sena J.A.D."/>
            <person name="de Souza A.A."/>
            <person name="Truffi D."/>
            <person name="Tsukumo F."/>
            <person name="Yanai G.M."/>
            <person name="Zaros L.G."/>
            <person name="Civerolo E.L."/>
            <person name="Simpson A.J.G."/>
            <person name="Almeida N.F. Jr."/>
            <person name="Setubal J.C."/>
            <person name="Kitajima J.P."/>
        </authorList>
    </citation>
    <scope>NUCLEOTIDE SEQUENCE [LARGE SCALE GENOMIC DNA]</scope>
    <source>
        <strain>Temecula1 / ATCC 700964</strain>
    </source>
</reference>
<sequence length="444" mass="48321">MGDFLASIWWMIVSFSVLVTFHEFGHYWVARRCGVKVLRFSIGFGTPLWSRRSSSGTEFVIGAIPLGGYVKMLDEREADVTVAERNQAFNRKSVWQRIAIVAAGPLANLLLCMLLLWVLFVIGKQDYSATVGRAEHLAAQAGIHPGDRITAIDGRQVTSWSEASMLLTAAAMDRQNAVLSVIGPYGERSEHTLELSKLKQPFDERHVTALVGINWQFMLQPPIIAKIEPGSIAEGAIKPGDIVLAVDGQQTLSTEDLYNQIQKLGRDGHPGMIEIRRGEERLALELSPRKSAQGVWLLGVKTNPGPVPAFDSQQRYGVLAAVPLAIRETARMTADSLGMMKRIITGQASAKNISGPISIAKIANASAKRGVGWFIYFLSLLSLSLAIINLFPIPILDGGHLLYYAIELLKGSPLSTRAMAAGQYIGLALLAGLMGLAFYNDLLG</sequence>
<evidence type="ECO:0000250" key="1"/>
<evidence type="ECO:0000255" key="2"/>
<evidence type="ECO:0000255" key="3">
    <source>
        <dbReference type="PROSITE-ProRule" id="PRU00143"/>
    </source>
</evidence>
<evidence type="ECO:0000255" key="4">
    <source>
        <dbReference type="PROSITE-ProRule" id="PRU10095"/>
    </source>
</evidence>
<evidence type="ECO:0000305" key="5"/>
<comment type="cofactor">
    <cofactor evidence="5">
        <name>Zn(2+)</name>
        <dbReference type="ChEBI" id="CHEBI:29105"/>
    </cofactor>
</comment>
<comment type="subcellular location">
    <subcellularLocation>
        <location evidence="1">Cell inner membrane</location>
        <topology evidence="1">Multi-pass membrane protein</topology>
    </subcellularLocation>
</comment>
<comment type="similarity">
    <text evidence="5">Belongs to the peptidase M50B family.</text>
</comment>
<keyword id="KW-0997">Cell inner membrane</keyword>
<keyword id="KW-1003">Cell membrane</keyword>
<keyword id="KW-0378">Hydrolase</keyword>
<keyword id="KW-0472">Membrane</keyword>
<keyword id="KW-0479">Metal-binding</keyword>
<keyword id="KW-0482">Metalloprotease</keyword>
<keyword id="KW-0645">Protease</keyword>
<keyword id="KW-1185">Reference proteome</keyword>
<keyword id="KW-0812">Transmembrane</keyword>
<keyword id="KW-1133">Transmembrane helix</keyword>
<keyword id="KW-0862">Zinc</keyword>
<accession>Q87EI0</accession>
<protein>
    <recommendedName>
        <fullName>Putative zinc metalloprotease PD_0327</fullName>
        <ecNumber>3.4.24.-</ecNumber>
    </recommendedName>
</protein>
<gene>
    <name type="ordered locus">PD_0327</name>
</gene>
<proteinExistence type="inferred from homology"/>
<organism>
    <name type="scientific">Xylella fastidiosa (strain Temecula1 / ATCC 700964)</name>
    <dbReference type="NCBI Taxonomy" id="183190"/>
    <lineage>
        <taxon>Bacteria</taxon>
        <taxon>Pseudomonadati</taxon>
        <taxon>Pseudomonadota</taxon>
        <taxon>Gammaproteobacteria</taxon>
        <taxon>Lysobacterales</taxon>
        <taxon>Lysobacteraceae</taxon>
        <taxon>Xylella</taxon>
    </lineage>
</organism>
<feature type="chain" id="PRO_0000088477" description="Putative zinc metalloprotease PD_0327">
    <location>
        <begin position="1"/>
        <end position="444"/>
    </location>
</feature>
<feature type="transmembrane region" description="Helical" evidence="2">
    <location>
        <begin position="98"/>
        <end position="120"/>
    </location>
</feature>
<feature type="transmembrane region" description="Helical" evidence="2">
    <location>
        <begin position="371"/>
        <end position="393"/>
    </location>
</feature>
<feature type="transmembrane region" description="Helical" evidence="2">
    <location>
        <begin position="418"/>
        <end position="440"/>
    </location>
</feature>
<feature type="domain" description="PDZ" evidence="3">
    <location>
        <begin position="192"/>
        <end position="278"/>
    </location>
</feature>
<feature type="active site" evidence="4">
    <location>
        <position position="23"/>
    </location>
</feature>
<feature type="binding site" evidence="4">
    <location>
        <position position="22"/>
    </location>
    <ligand>
        <name>Zn(2+)</name>
        <dbReference type="ChEBI" id="CHEBI:29105"/>
        <note>catalytic</note>
    </ligand>
</feature>
<feature type="binding site" evidence="4">
    <location>
        <position position="26"/>
    </location>
    <ligand>
        <name>Zn(2+)</name>
        <dbReference type="ChEBI" id="CHEBI:29105"/>
        <note>catalytic</note>
    </ligand>
</feature>
<name>Y327_XYLFT</name>